<name>RSGA_STRA5</name>
<gene>
    <name evidence="1" type="primary">rsgA</name>
    <name type="ordered locus">SAG1777</name>
</gene>
<dbReference type="EC" id="3.6.1.-" evidence="1"/>
<dbReference type="EMBL" id="AE009948">
    <property type="protein sequence ID" value="AAN00640.1"/>
    <property type="molecule type" value="Genomic_DNA"/>
</dbReference>
<dbReference type="RefSeq" id="NP_688767.1">
    <property type="nucleotide sequence ID" value="NC_004116.1"/>
</dbReference>
<dbReference type="RefSeq" id="WP_001162036.1">
    <property type="nucleotide sequence ID" value="NC_004116.1"/>
</dbReference>
<dbReference type="SMR" id="Q8DXR9"/>
<dbReference type="STRING" id="208435.SAG1777"/>
<dbReference type="KEGG" id="sag:SAG1777"/>
<dbReference type="PATRIC" id="fig|208435.3.peg.1783"/>
<dbReference type="HOGENOM" id="CLU_033617_2_1_9"/>
<dbReference type="OrthoDB" id="9809485at2"/>
<dbReference type="Proteomes" id="UP000000821">
    <property type="component" value="Chromosome"/>
</dbReference>
<dbReference type="GO" id="GO:0005737">
    <property type="term" value="C:cytoplasm"/>
    <property type="evidence" value="ECO:0007669"/>
    <property type="project" value="UniProtKB-SubCell"/>
</dbReference>
<dbReference type="GO" id="GO:0005525">
    <property type="term" value="F:GTP binding"/>
    <property type="evidence" value="ECO:0007669"/>
    <property type="project" value="UniProtKB-UniRule"/>
</dbReference>
<dbReference type="GO" id="GO:0003924">
    <property type="term" value="F:GTPase activity"/>
    <property type="evidence" value="ECO:0007669"/>
    <property type="project" value="UniProtKB-UniRule"/>
</dbReference>
<dbReference type="GO" id="GO:0046872">
    <property type="term" value="F:metal ion binding"/>
    <property type="evidence" value="ECO:0007669"/>
    <property type="project" value="UniProtKB-KW"/>
</dbReference>
<dbReference type="GO" id="GO:0019843">
    <property type="term" value="F:rRNA binding"/>
    <property type="evidence" value="ECO:0007669"/>
    <property type="project" value="UniProtKB-KW"/>
</dbReference>
<dbReference type="GO" id="GO:0042274">
    <property type="term" value="P:ribosomal small subunit biogenesis"/>
    <property type="evidence" value="ECO:0007669"/>
    <property type="project" value="UniProtKB-UniRule"/>
</dbReference>
<dbReference type="CDD" id="cd04466">
    <property type="entry name" value="S1_YloQ_GTPase"/>
    <property type="match status" value="1"/>
</dbReference>
<dbReference type="CDD" id="cd01854">
    <property type="entry name" value="YjeQ_EngC"/>
    <property type="match status" value="1"/>
</dbReference>
<dbReference type="Gene3D" id="2.40.50.140">
    <property type="entry name" value="Nucleic acid-binding proteins"/>
    <property type="match status" value="1"/>
</dbReference>
<dbReference type="Gene3D" id="3.40.50.300">
    <property type="entry name" value="P-loop containing nucleotide triphosphate hydrolases"/>
    <property type="match status" value="1"/>
</dbReference>
<dbReference type="Gene3D" id="1.10.40.50">
    <property type="entry name" value="Probable gtpase engc, domain 3"/>
    <property type="match status" value="1"/>
</dbReference>
<dbReference type="HAMAP" id="MF_01820">
    <property type="entry name" value="GTPase_RsgA"/>
    <property type="match status" value="1"/>
</dbReference>
<dbReference type="InterPro" id="IPR030378">
    <property type="entry name" value="G_CP_dom"/>
</dbReference>
<dbReference type="InterPro" id="IPR012340">
    <property type="entry name" value="NA-bd_OB-fold"/>
</dbReference>
<dbReference type="InterPro" id="IPR027417">
    <property type="entry name" value="P-loop_NTPase"/>
</dbReference>
<dbReference type="InterPro" id="IPR004881">
    <property type="entry name" value="Ribosome_biogen_GTPase_RsgA"/>
</dbReference>
<dbReference type="InterPro" id="IPR010914">
    <property type="entry name" value="RsgA_GTPase_dom"/>
</dbReference>
<dbReference type="InterPro" id="IPR031944">
    <property type="entry name" value="RsgA_N"/>
</dbReference>
<dbReference type="NCBIfam" id="TIGR00157">
    <property type="entry name" value="ribosome small subunit-dependent GTPase A"/>
    <property type="match status" value="1"/>
</dbReference>
<dbReference type="PANTHER" id="PTHR32120">
    <property type="entry name" value="SMALL RIBOSOMAL SUBUNIT BIOGENESIS GTPASE RSGA"/>
    <property type="match status" value="1"/>
</dbReference>
<dbReference type="PANTHER" id="PTHR32120:SF11">
    <property type="entry name" value="SMALL RIBOSOMAL SUBUNIT BIOGENESIS GTPASE RSGA 1, MITOCHONDRIAL-RELATED"/>
    <property type="match status" value="1"/>
</dbReference>
<dbReference type="Pfam" id="PF03193">
    <property type="entry name" value="RsgA_GTPase"/>
    <property type="match status" value="1"/>
</dbReference>
<dbReference type="Pfam" id="PF16745">
    <property type="entry name" value="RsgA_N"/>
    <property type="match status" value="1"/>
</dbReference>
<dbReference type="SUPFAM" id="SSF50249">
    <property type="entry name" value="Nucleic acid-binding proteins"/>
    <property type="match status" value="1"/>
</dbReference>
<dbReference type="SUPFAM" id="SSF52540">
    <property type="entry name" value="P-loop containing nucleoside triphosphate hydrolases"/>
    <property type="match status" value="1"/>
</dbReference>
<dbReference type="PROSITE" id="PS50936">
    <property type="entry name" value="ENGC_GTPASE"/>
    <property type="match status" value="1"/>
</dbReference>
<dbReference type="PROSITE" id="PS51721">
    <property type="entry name" value="G_CP"/>
    <property type="match status" value="1"/>
</dbReference>
<organism>
    <name type="scientific">Streptococcus agalactiae serotype V (strain ATCC BAA-611 / 2603 V/R)</name>
    <dbReference type="NCBI Taxonomy" id="208435"/>
    <lineage>
        <taxon>Bacteria</taxon>
        <taxon>Bacillati</taxon>
        <taxon>Bacillota</taxon>
        <taxon>Bacilli</taxon>
        <taxon>Lactobacillales</taxon>
        <taxon>Streptococcaceae</taxon>
        <taxon>Streptococcus</taxon>
    </lineage>
</organism>
<sequence>MQGRIVKSLAGFYYVESDGVVYQTRARGNFRKKGQIPYVGDWVEFSSQDQSEGYILSIEERKNSLVRPPIVNIDQAVVIMSAKEPDFNANLLDRFLVLLEYKMIQPIIYISKLDLLDDLVVIDDIREHYQNIGYVFCYSQEELLPLLANKVTVFMGQTGVGKSTLLNKIAPELKLETGEISGSLGRGRHTTRAVSFYNVHKGKIADTPGFSSLDYEVDNAEDLNESFPELRRLSHFCKFRSCTHTHEPKCAVKEALTQGQLWQVRYDNYLQFLSEIESRRETYKKVIKRK</sequence>
<comment type="function">
    <text evidence="1">One of several proteins that assist in the late maturation steps of the functional core of the 30S ribosomal subunit. Helps release RbfA from mature subunits. May play a role in the assembly of ribosomal proteins into the subunit. Circularly permuted GTPase that catalyzes slow GTP hydrolysis, GTPase activity is stimulated by the 30S ribosomal subunit.</text>
</comment>
<comment type="cofactor">
    <cofactor evidence="1">
        <name>Zn(2+)</name>
        <dbReference type="ChEBI" id="CHEBI:29105"/>
    </cofactor>
    <text evidence="1">Binds 1 zinc ion per subunit.</text>
</comment>
<comment type="subunit">
    <text evidence="1">Monomer. Associates with 30S ribosomal subunit, binds 16S rRNA.</text>
</comment>
<comment type="subcellular location">
    <subcellularLocation>
        <location evidence="1">Cytoplasm</location>
    </subcellularLocation>
</comment>
<comment type="similarity">
    <text evidence="1">Belongs to the TRAFAC class YlqF/YawG GTPase family. RsgA subfamily.</text>
</comment>
<keyword id="KW-0963">Cytoplasm</keyword>
<keyword id="KW-0342">GTP-binding</keyword>
<keyword id="KW-0378">Hydrolase</keyword>
<keyword id="KW-0479">Metal-binding</keyword>
<keyword id="KW-0547">Nucleotide-binding</keyword>
<keyword id="KW-1185">Reference proteome</keyword>
<keyword id="KW-0690">Ribosome biogenesis</keyword>
<keyword id="KW-0694">RNA-binding</keyword>
<keyword id="KW-0699">rRNA-binding</keyword>
<keyword id="KW-0862">Zinc</keyword>
<protein>
    <recommendedName>
        <fullName evidence="1">Small ribosomal subunit biogenesis GTPase RsgA</fullName>
        <ecNumber evidence="1">3.6.1.-</ecNumber>
    </recommendedName>
</protein>
<feature type="chain" id="PRO_0000171524" description="Small ribosomal subunit biogenesis GTPase RsgA">
    <location>
        <begin position="1"/>
        <end position="290"/>
    </location>
</feature>
<feature type="domain" description="CP-type G" evidence="2">
    <location>
        <begin position="62"/>
        <end position="213"/>
    </location>
</feature>
<feature type="binding site" evidence="1">
    <location>
        <begin position="111"/>
        <end position="114"/>
    </location>
    <ligand>
        <name>GTP</name>
        <dbReference type="ChEBI" id="CHEBI:37565"/>
    </ligand>
</feature>
<feature type="binding site" evidence="1">
    <location>
        <begin position="156"/>
        <end position="164"/>
    </location>
    <ligand>
        <name>GTP</name>
        <dbReference type="ChEBI" id="CHEBI:37565"/>
    </ligand>
</feature>
<feature type="binding site" evidence="1">
    <location>
        <position position="237"/>
    </location>
    <ligand>
        <name>Zn(2+)</name>
        <dbReference type="ChEBI" id="CHEBI:29105"/>
    </ligand>
</feature>
<feature type="binding site" evidence="1">
    <location>
        <position position="242"/>
    </location>
    <ligand>
        <name>Zn(2+)</name>
        <dbReference type="ChEBI" id="CHEBI:29105"/>
    </ligand>
</feature>
<feature type="binding site" evidence="1">
    <location>
        <position position="244"/>
    </location>
    <ligand>
        <name>Zn(2+)</name>
        <dbReference type="ChEBI" id="CHEBI:29105"/>
    </ligand>
</feature>
<feature type="binding site" evidence="1">
    <location>
        <position position="250"/>
    </location>
    <ligand>
        <name>Zn(2+)</name>
        <dbReference type="ChEBI" id="CHEBI:29105"/>
    </ligand>
</feature>
<proteinExistence type="inferred from homology"/>
<reference key="1">
    <citation type="journal article" date="2002" name="Proc. Natl. Acad. Sci. U.S.A.">
        <title>Complete genome sequence and comparative genomic analysis of an emerging human pathogen, serotype V Streptococcus agalactiae.</title>
        <authorList>
            <person name="Tettelin H."/>
            <person name="Masignani V."/>
            <person name="Cieslewicz M.J."/>
            <person name="Eisen J.A."/>
            <person name="Peterson S.N."/>
            <person name="Wessels M.R."/>
            <person name="Paulsen I.T."/>
            <person name="Nelson K.E."/>
            <person name="Margarit I."/>
            <person name="Read T.D."/>
            <person name="Madoff L.C."/>
            <person name="Wolf A.M."/>
            <person name="Beanan M.J."/>
            <person name="Brinkac L.M."/>
            <person name="Daugherty S.C."/>
            <person name="DeBoy R.T."/>
            <person name="Durkin A.S."/>
            <person name="Kolonay J.F."/>
            <person name="Madupu R."/>
            <person name="Lewis M.R."/>
            <person name="Radune D."/>
            <person name="Fedorova N.B."/>
            <person name="Scanlan D."/>
            <person name="Khouri H.M."/>
            <person name="Mulligan S."/>
            <person name="Carty H.A."/>
            <person name="Cline R.T."/>
            <person name="Van Aken S.E."/>
            <person name="Gill J."/>
            <person name="Scarselli M."/>
            <person name="Mora M."/>
            <person name="Iacobini E.T."/>
            <person name="Brettoni C."/>
            <person name="Galli G."/>
            <person name="Mariani M."/>
            <person name="Vegni F."/>
            <person name="Maione D."/>
            <person name="Rinaudo D."/>
            <person name="Rappuoli R."/>
            <person name="Telford J.L."/>
            <person name="Kasper D.L."/>
            <person name="Grandi G."/>
            <person name="Fraser C.M."/>
        </authorList>
    </citation>
    <scope>NUCLEOTIDE SEQUENCE [LARGE SCALE GENOMIC DNA]</scope>
    <source>
        <strain>ATCC BAA-611 / 2603 V/R</strain>
    </source>
</reference>
<accession>Q8DXR9</accession>
<evidence type="ECO:0000255" key="1">
    <source>
        <dbReference type="HAMAP-Rule" id="MF_01820"/>
    </source>
</evidence>
<evidence type="ECO:0000255" key="2">
    <source>
        <dbReference type="PROSITE-ProRule" id="PRU01058"/>
    </source>
</evidence>